<name>RNFH_PSEF5</name>
<organism>
    <name type="scientific">Pseudomonas fluorescens (strain ATCC BAA-477 / NRRL B-23932 / Pf-5)</name>
    <dbReference type="NCBI Taxonomy" id="220664"/>
    <lineage>
        <taxon>Bacteria</taxon>
        <taxon>Pseudomonadati</taxon>
        <taxon>Pseudomonadota</taxon>
        <taxon>Gammaproteobacteria</taxon>
        <taxon>Pseudomonadales</taxon>
        <taxon>Pseudomonadaceae</taxon>
        <taxon>Pseudomonas</taxon>
    </lineage>
</organism>
<gene>
    <name evidence="1" type="primary">rnfH</name>
    <name type="ordered locus">PFL_0822</name>
</gene>
<evidence type="ECO:0000255" key="1">
    <source>
        <dbReference type="HAMAP-Rule" id="MF_00460"/>
    </source>
</evidence>
<evidence type="ECO:0000305" key="2"/>
<reference key="1">
    <citation type="journal article" date="2005" name="Nat. Biotechnol.">
        <title>Complete genome sequence of the plant commensal Pseudomonas fluorescens Pf-5.</title>
        <authorList>
            <person name="Paulsen I.T."/>
            <person name="Press C.M."/>
            <person name="Ravel J."/>
            <person name="Kobayashi D.Y."/>
            <person name="Myers G.S.A."/>
            <person name="Mavrodi D.V."/>
            <person name="DeBoy R.T."/>
            <person name="Seshadri R."/>
            <person name="Ren Q."/>
            <person name="Madupu R."/>
            <person name="Dodson R.J."/>
            <person name="Durkin A.S."/>
            <person name="Brinkac L.M."/>
            <person name="Daugherty S.C."/>
            <person name="Sullivan S.A."/>
            <person name="Rosovitz M.J."/>
            <person name="Gwinn M.L."/>
            <person name="Zhou L."/>
            <person name="Schneider D.J."/>
            <person name="Cartinhour S.W."/>
            <person name="Nelson W.C."/>
            <person name="Weidman J."/>
            <person name="Watkins K."/>
            <person name="Tran K."/>
            <person name="Khouri H."/>
            <person name="Pierson E.A."/>
            <person name="Pierson L.S. III"/>
            <person name="Thomashow L.S."/>
            <person name="Loper J.E."/>
        </authorList>
    </citation>
    <scope>NUCLEOTIDE SEQUENCE [LARGE SCALE GENOMIC DNA]</scope>
    <source>
        <strain>ATCC BAA-477 / NRRL B-23932 / Pf-5</strain>
    </source>
</reference>
<feature type="chain" id="PRO_1000013587" description="Protein RnfH">
    <location>
        <begin position="1"/>
        <end position="104"/>
    </location>
</feature>
<dbReference type="EMBL" id="CP000076">
    <property type="protein sequence ID" value="AAY96222.2"/>
    <property type="status" value="ALT_INIT"/>
    <property type="molecule type" value="Genomic_DNA"/>
</dbReference>
<dbReference type="RefSeq" id="WP_019096044.1">
    <property type="nucleotide sequence ID" value="NC_004129.6"/>
</dbReference>
<dbReference type="SMR" id="Q4KIH6"/>
<dbReference type="STRING" id="220664.PFL_0822"/>
<dbReference type="KEGG" id="pfl:PFL_0822"/>
<dbReference type="PATRIC" id="fig|220664.5.peg.843"/>
<dbReference type="eggNOG" id="COG2914">
    <property type="taxonomic scope" value="Bacteria"/>
</dbReference>
<dbReference type="HOGENOM" id="CLU_150721_1_0_6"/>
<dbReference type="Proteomes" id="UP000008540">
    <property type="component" value="Chromosome"/>
</dbReference>
<dbReference type="Gene3D" id="3.10.20.280">
    <property type="entry name" value="RnfH-like"/>
    <property type="match status" value="1"/>
</dbReference>
<dbReference type="HAMAP" id="MF_00460">
    <property type="entry name" value="UPF0125_RnfH"/>
    <property type="match status" value="1"/>
</dbReference>
<dbReference type="InterPro" id="IPR016155">
    <property type="entry name" value="Mopterin_synth/thiamin_S_b"/>
</dbReference>
<dbReference type="InterPro" id="IPR005346">
    <property type="entry name" value="RnfH"/>
</dbReference>
<dbReference type="InterPro" id="IPR037021">
    <property type="entry name" value="RnfH_sf"/>
</dbReference>
<dbReference type="NCBIfam" id="NF002490">
    <property type="entry name" value="PRK01777.1"/>
    <property type="match status" value="1"/>
</dbReference>
<dbReference type="PANTHER" id="PTHR37483">
    <property type="entry name" value="UPF0125 PROTEIN RATB"/>
    <property type="match status" value="1"/>
</dbReference>
<dbReference type="PANTHER" id="PTHR37483:SF1">
    <property type="entry name" value="UPF0125 PROTEIN RATB"/>
    <property type="match status" value="1"/>
</dbReference>
<dbReference type="Pfam" id="PF03658">
    <property type="entry name" value="Ub-RnfH"/>
    <property type="match status" value="1"/>
</dbReference>
<dbReference type="SUPFAM" id="SSF54285">
    <property type="entry name" value="MoaD/ThiS"/>
    <property type="match status" value="1"/>
</dbReference>
<accession>Q4KIH6</accession>
<sequence>MAEPMISIEVAYAAVDRQALIRVQVPQGSTLRAALQASAIGQQFPELDLAACPVGIFGKQVSDPEQHVIQAGDRIEVYRPLLADPKEVRRLRAAKAAEARKRES</sequence>
<proteinExistence type="inferred from homology"/>
<comment type="similarity">
    <text evidence="1">Belongs to the UPF0125 (RnfH) family.</text>
</comment>
<comment type="sequence caution" evidence="2">
    <conflict type="erroneous initiation">
        <sequence resource="EMBL-CDS" id="AAY96222"/>
    </conflict>
    <text>Truncated N-terminus.</text>
</comment>
<protein>
    <recommendedName>
        <fullName evidence="1">Protein RnfH</fullName>
    </recommendedName>
</protein>